<comment type="function">
    <text evidence="1">Endonuclease that specifically degrades the RNA of RNA-DNA hybrids.</text>
</comment>
<comment type="catalytic activity">
    <reaction>
        <text>Endonucleolytic cleavage to 5'-phosphomonoester.</text>
        <dbReference type="EC" id="3.1.26.4"/>
    </reaction>
</comment>
<comment type="cofactor">
    <cofactor evidence="1">
        <name>Mg(2+)</name>
        <dbReference type="ChEBI" id="CHEBI:18420"/>
    </cofactor>
    <text evidence="1">Binds 1 Mg(2+) ion per subunit. May bind a second metal ion at a regulatory site, or after substrate binding.</text>
</comment>
<comment type="subunit">
    <text evidence="1">Monomer.</text>
</comment>
<comment type="subcellular location">
    <subcellularLocation>
        <location evidence="3">Cytoplasm</location>
    </subcellularLocation>
</comment>
<comment type="similarity">
    <text evidence="3">Belongs to the RNase H family.</text>
</comment>
<keyword id="KW-0963">Cytoplasm</keyword>
<keyword id="KW-0255">Endonuclease</keyword>
<keyword id="KW-0378">Hydrolase</keyword>
<keyword id="KW-0460">Magnesium</keyword>
<keyword id="KW-0479">Metal-binding</keyword>
<keyword id="KW-0540">Nuclease</keyword>
<keyword id="KW-1185">Reference proteome</keyword>
<feature type="chain" id="PRO_0000195398" description="Ribonuclease HI">
    <location>
        <begin position="1"/>
        <end position="152"/>
    </location>
</feature>
<feature type="domain" description="RNase H type-1" evidence="2">
    <location>
        <begin position="1"/>
        <end position="142"/>
    </location>
</feature>
<feature type="binding site" evidence="1">
    <location>
        <position position="10"/>
    </location>
    <ligand>
        <name>Mg(2+)</name>
        <dbReference type="ChEBI" id="CHEBI:18420"/>
        <label>1</label>
    </ligand>
</feature>
<feature type="binding site" evidence="1">
    <location>
        <position position="10"/>
    </location>
    <ligand>
        <name>Mg(2+)</name>
        <dbReference type="ChEBI" id="CHEBI:18420"/>
        <label>2</label>
    </ligand>
</feature>
<feature type="binding site" evidence="1">
    <location>
        <position position="48"/>
    </location>
    <ligand>
        <name>Mg(2+)</name>
        <dbReference type="ChEBI" id="CHEBI:18420"/>
        <label>1</label>
    </ligand>
</feature>
<feature type="binding site" evidence="1">
    <location>
        <position position="70"/>
    </location>
    <ligand>
        <name>Mg(2+)</name>
        <dbReference type="ChEBI" id="CHEBI:18420"/>
        <label>1</label>
    </ligand>
</feature>
<feature type="binding site" evidence="1">
    <location>
        <position position="134"/>
    </location>
    <ligand>
        <name>Mg(2+)</name>
        <dbReference type="ChEBI" id="CHEBI:18420"/>
        <label>2</label>
    </ligand>
</feature>
<reference key="1">
    <citation type="journal article" date="1998" name="Nature">
        <title>The genome sequence of Rickettsia prowazekii and the origin of mitochondria.</title>
        <authorList>
            <person name="Andersson S.G.E."/>
            <person name="Zomorodipour A."/>
            <person name="Andersson J.O."/>
            <person name="Sicheritz-Ponten T."/>
            <person name="Alsmark U.C.M."/>
            <person name="Podowski R.M."/>
            <person name="Naeslund A.K."/>
            <person name="Eriksson A.-S."/>
            <person name="Winkler H.H."/>
            <person name="Kurland C.G."/>
        </authorList>
    </citation>
    <scope>NUCLEOTIDE SEQUENCE [LARGE SCALE GENOMIC DNA]</scope>
    <source>
        <strain>Madrid E</strain>
    </source>
</reference>
<proteinExistence type="inferred from homology"/>
<name>RNH_RICPR</name>
<accession>Q9ZCK3</accession>
<sequence>MDSKVVIYTDGACSGNPGPGGWGALLHFNDTSKKIFGYELVTTNNRMEMTAALEALRILKKSSVVEIYTDSKYLQHGITVWIHNWIKNNWCKSNNAPVKNADLWQKLYSELSKHTIMWKWVKGHASNSGNIAADKLAVQGRETAMEILKCLG</sequence>
<organism>
    <name type="scientific">Rickettsia prowazekii (strain Madrid E)</name>
    <dbReference type="NCBI Taxonomy" id="272947"/>
    <lineage>
        <taxon>Bacteria</taxon>
        <taxon>Pseudomonadati</taxon>
        <taxon>Pseudomonadota</taxon>
        <taxon>Alphaproteobacteria</taxon>
        <taxon>Rickettsiales</taxon>
        <taxon>Rickettsiaceae</taxon>
        <taxon>Rickettsieae</taxon>
        <taxon>Rickettsia</taxon>
        <taxon>typhus group</taxon>
    </lineage>
</organism>
<gene>
    <name type="primary">rnhA</name>
    <name type="ordered locus">RP726</name>
</gene>
<evidence type="ECO:0000250" key="1"/>
<evidence type="ECO:0000255" key="2">
    <source>
        <dbReference type="PROSITE-ProRule" id="PRU00408"/>
    </source>
</evidence>
<evidence type="ECO:0000305" key="3"/>
<dbReference type="EC" id="3.1.26.4"/>
<dbReference type="EMBL" id="AJ235273">
    <property type="protein sequence ID" value="CAA15157.1"/>
    <property type="molecule type" value="Genomic_DNA"/>
</dbReference>
<dbReference type="PIR" id="E71632">
    <property type="entry name" value="E71632"/>
</dbReference>
<dbReference type="RefSeq" id="NP_221081.1">
    <property type="nucleotide sequence ID" value="NC_000963.1"/>
</dbReference>
<dbReference type="SMR" id="Q9ZCK3"/>
<dbReference type="STRING" id="272947.gene:17555798"/>
<dbReference type="EnsemblBacteria" id="CAA15157">
    <property type="protein sequence ID" value="CAA15157"/>
    <property type="gene ID" value="CAA15157"/>
</dbReference>
<dbReference type="KEGG" id="rpr:RP726"/>
<dbReference type="PATRIC" id="fig|272947.5.peg.762"/>
<dbReference type="eggNOG" id="COG0328">
    <property type="taxonomic scope" value="Bacteria"/>
</dbReference>
<dbReference type="HOGENOM" id="CLU_030894_6_0_5"/>
<dbReference type="OrthoDB" id="7845843at2"/>
<dbReference type="Proteomes" id="UP000002480">
    <property type="component" value="Chromosome"/>
</dbReference>
<dbReference type="GO" id="GO:0005737">
    <property type="term" value="C:cytoplasm"/>
    <property type="evidence" value="ECO:0007669"/>
    <property type="project" value="UniProtKB-SubCell"/>
</dbReference>
<dbReference type="GO" id="GO:0000287">
    <property type="term" value="F:magnesium ion binding"/>
    <property type="evidence" value="ECO:0007669"/>
    <property type="project" value="UniProtKB-UniRule"/>
</dbReference>
<dbReference type="GO" id="GO:0003676">
    <property type="term" value="F:nucleic acid binding"/>
    <property type="evidence" value="ECO:0007669"/>
    <property type="project" value="InterPro"/>
</dbReference>
<dbReference type="GO" id="GO:0004523">
    <property type="term" value="F:RNA-DNA hybrid ribonuclease activity"/>
    <property type="evidence" value="ECO:0007669"/>
    <property type="project" value="UniProtKB-UniRule"/>
</dbReference>
<dbReference type="GO" id="GO:0043137">
    <property type="term" value="P:DNA replication, removal of RNA primer"/>
    <property type="evidence" value="ECO:0007669"/>
    <property type="project" value="TreeGrafter"/>
</dbReference>
<dbReference type="CDD" id="cd09278">
    <property type="entry name" value="RNase_HI_prokaryote_like"/>
    <property type="match status" value="1"/>
</dbReference>
<dbReference type="FunFam" id="3.30.420.10:FF:000089">
    <property type="entry name" value="Ribonuclease H"/>
    <property type="match status" value="1"/>
</dbReference>
<dbReference type="Gene3D" id="3.30.420.10">
    <property type="entry name" value="Ribonuclease H-like superfamily/Ribonuclease H"/>
    <property type="match status" value="1"/>
</dbReference>
<dbReference type="HAMAP" id="MF_00042">
    <property type="entry name" value="RNase_H"/>
    <property type="match status" value="1"/>
</dbReference>
<dbReference type="InterPro" id="IPR050092">
    <property type="entry name" value="RNase_H"/>
</dbReference>
<dbReference type="InterPro" id="IPR012337">
    <property type="entry name" value="RNaseH-like_sf"/>
</dbReference>
<dbReference type="InterPro" id="IPR002156">
    <property type="entry name" value="RNaseH_domain"/>
</dbReference>
<dbReference type="InterPro" id="IPR036397">
    <property type="entry name" value="RNaseH_sf"/>
</dbReference>
<dbReference type="InterPro" id="IPR022892">
    <property type="entry name" value="RNaseHI"/>
</dbReference>
<dbReference type="NCBIfam" id="NF001236">
    <property type="entry name" value="PRK00203.1"/>
    <property type="match status" value="1"/>
</dbReference>
<dbReference type="PANTHER" id="PTHR10642">
    <property type="entry name" value="RIBONUCLEASE H1"/>
    <property type="match status" value="1"/>
</dbReference>
<dbReference type="PANTHER" id="PTHR10642:SF26">
    <property type="entry name" value="RIBONUCLEASE H1"/>
    <property type="match status" value="1"/>
</dbReference>
<dbReference type="Pfam" id="PF00075">
    <property type="entry name" value="RNase_H"/>
    <property type="match status" value="1"/>
</dbReference>
<dbReference type="SUPFAM" id="SSF53098">
    <property type="entry name" value="Ribonuclease H-like"/>
    <property type="match status" value="1"/>
</dbReference>
<dbReference type="PROSITE" id="PS50879">
    <property type="entry name" value="RNASE_H_1"/>
    <property type="match status" value="1"/>
</dbReference>
<protein>
    <recommendedName>
        <fullName>Ribonuclease HI</fullName>
        <shortName>RNase HI</shortName>
        <ecNumber>3.1.26.4</ecNumber>
    </recommendedName>
</protein>